<comment type="catalytic activity">
    <reaction evidence="1">
        <text>D-erythro-1-(imidazol-4-yl)glycerol 3-phosphate = 3-(imidazol-4-yl)-2-oxopropyl phosphate + H2O</text>
        <dbReference type="Rhea" id="RHEA:11040"/>
        <dbReference type="ChEBI" id="CHEBI:15377"/>
        <dbReference type="ChEBI" id="CHEBI:57766"/>
        <dbReference type="ChEBI" id="CHEBI:58278"/>
        <dbReference type="EC" id="4.2.1.19"/>
    </reaction>
</comment>
<comment type="pathway">
    <text evidence="1">Amino-acid biosynthesis; L-histidine biosynthesis; L-histidine from 5-phospho-alpha-D-ribose 1-diphosphate: step 6/9.</text>
</comment>
<comment type="subcellular location">
    <subcellularLocation>
        <location evidence="1">Cytoplasm</location>
    </subcellularLocation>
</comment>
<comment type="similarity">
    <text evidence="1">Belongs to the imidazoleglycerol-phosphate dehydratase family.</text>
</comment>
<accession>A6VTA8</accession>
<sequence>MADRIASVERNTLETQIKVSINLDGTGKFNCVTGVPFLDHMLEQVARHGLIDLDIHAVGDLHIDAHHTVEDLGITLGQAFDIAVGDKKGIKRYGHAYVPLDEALSRVVIDFSGRPGLEMHVPFARASVGGFDVDLFSEFFHGFINHAKVTLHLDNLRGKNTHHQAETIFKAFGRALRMALEADERMAGQMPSTKGSL</sequence>
<gene>
    <name evidence="1" type="primary">hisB</name>
    <name type="ordered locus">Mmwyl1_0753</name>
</gene>
<protein>
    <recommendedName>
        <fullName evidence="1">Imidazoleglycerol-phosphate dehydratase</fullName>
        <shortName evidence="1">IGPD</shortName>
        <ecNumber evidence="1">4.2.1.19</ecNumber>
    </recommendedName>
</protein>
<dbReference type="EC" id="4.2.1.19" evidence="1"/>
<dbReference type="EMBL" id="CP000749">
    <property type="protein sequence ID" value="ABR69687.1"/>
    <property type="molecule type" value="Genomic_DNA"/>
</dbReference>
<dbReference type="SMR" id="A6VTA8"/>
<dbReference type="STRING" id="400668.Mmwyl1_0753"/>
<dbReference type="KEGG" id="mmw:Mmwyl1_0753"/>
<dbReference type="eggNOG" id="COG0131">
    <property type="taxonomic scope" value="Bacteria"/>
</dbReference>
<dbReference type="HOGENOM" id="CLU_044308_3_0_6"/>
<dbReference type="OrthoDB" id="9790411at2"/>
<dbReference type="UniPathway" id="UPA00031">
    <property type="reaction ID" value="UER00011"/>
</dbReference>
<dbReference type="GO" id="GO:0005737">
    <property type="term" value="C:cytoplasm"/>
    <property type="evidence" value="ECO:0007669"/>
    <property type="project" value="UniProtKB-SubCell"/>
</dbReference>
<dbReference type="GO" id="GO:0004424">
    <property type="term" value="F:imidazoleglycerol-phosphate dehydratase activity"/>
    <property type="evidence" value="ECO:0007669"/>
    <property type="project" value="UniProtKB-UniRule"/>
</dbReference>
<dbReference type="GO" id="GO:0000105">
    <property type="term" value="P:L-histidine biosynthetic process"/>
    <property type="evidence" value="ECO:0007669"/>
    <property type="project" value="UniProtKB-UniRule"/>
</dbReference>
<dbReference type="CDD" id="cd07914">
    <property type="entry name" value="IGPD"/>
    <property type="match status" value="1"/>
</dbReference>
<dbReference type="FunFam" id="3.30.230.40:FF:000002">
    <property type="entry name" value="Imidazoleglycerol-phosphate dehydratase"/>
    <property type="match status" value="1"/>
</dbReference>
<dbReference type="FunFam" id="3.30.230.40:FF:000003">
    <property type="entry name" value="Imidazoleglycerol-phosphate dehydratase HisB"/>
    <property type="match status" value="1"/>
</dbReference>
<dbReference type="Gene3D" id="3.30.230.40">
    <property type="entry name" value="Imidazole glycerol phosphate dehydratase, domain 1"/>
    <property type="match status" value="2"/>
</dbReference>
<dbReference type="HAMAP" id="MF_00076">
    <property type="entry name" value="HisB"/>
    <property type="match status" value="1"/>
</dbReference>
<dbReference type="InterPro" id="IPR038494">
    <property type="entry name" value="IGPD_sf"/>
</dbReference>
<dbReference type="InterPro" id="IPR000807">
    <property type="entry name" value="ImidazoleglycerolP_deHydtase"/>
</dbReference>
<dbReference type="InterPro" id="IPR020565">
    <property type="entry name" value="ImidazoleglycerP_deHydtase_CS"/>
</dbReference>
<dbReference type="InterPro" id="IPR020568">
    <property type="entry name" value="Ribosomal_Su5_D2-typ_SF"/>
</dbReference>
<dbReference type="NCBIfam" id="NF002106">
    <property type="entry name" value="PRK00951.1-1"/>
    <property type="match status" value="1"/>
</dbReference>
<dbReference type="NCBIfam" id="NF002111">
    <property type="entry name" value="PRK00951.2-1"/>
    <property type="match status" value="1"/>
</dbReference>
<dbReference type="NCBIfam" id="NF002114">
    <property type="entry name" value="PRK00951.2-4"/>
    <property type="match status" value="1"/>
</dbReference>
<dbReference type="PANTHER" id="PTHR23133:SF2">
    <property type="entry name" value="IMIDAZOLEGLYCEROL-PHOSPHATE DEHYDRATASE"/>
    <property type="match status" value="1"/>
</dbReference>
<dbReference type="PANTHER" id="PTHR23133">
    <property type="entry name" value="IMIDAZOLEGLYCEROL-PHOSPHATE DEHYDRATASE HIS7"/>
    <property type="match status" value="1"/>
</dbReference>
<dbReference type="Pfam" id="PF00475">
    <property type="entry name" value="IGPD"/>
    <property type="match status" value="1"/>
</dbReference>
<dbReference type="SUPFAM" id="SSF54211">
    <property type="entry name" value="Ribosomal protein S5 domain 2-like"/>
    <property type="match status" value="2"/>
</dbReference>
<dbReference type="PROSITE" id="PS00954">
    <property type="entry name" value="IGP_DEHYDRATASE_1"/>
    <property type="match status" value="1"/>
</dbReference>
<dbReference type="PROSITE" id="PS00955">
    <property type="entry name" value="IGP_DEHYDRATASE_2"/>
    <property type="match status" value="1"/>
</dbReference>
<feature type="chain" id="PRO_1000075250" description="Imidazoleglycerol-phosphate dehydratase">
    <location>
        <begin position="1"/>
        <end position="197"/>
    </location>
</feature>
<name>HIS7_MARMS</name>
<organism>
    <name type="scientific">Marinomonas sp. (strain MWYL1)</name>
    <dbReference type="NCBI Taxonomy" id="400668"/>
    <lineage>
        <taxon>Bacteria</taxon>
        <taxon>Pseudomonadati</taxon>
        <taxon>Pseudomonadota</taxon>
        <taxon>Gammaproteobacteria</taxon>
        <taxon>Oceanospirillales</taxon>
        <taxon>Oceanospirillaceae</taxon>
        <taxon>Marinomonas</taxon>
    </lineage>
</organism>
<evidence type="ECO:0000255" key="1">
    <source>
        <dbReference type="HAMAP-Rule" id="MF_00076"/>
    </source>
</evidence>
<keyword id="KW-0028">Amino-acid biosynthesis</keyword>
<keyword id="KW-0963">Cytoplasm</keyword>
<keyword id="KW-0368">Histidine biosynthesis</keyword>
<keyword id="KW-0456">Lyase</keyword>
<reference key="1">
    <citation type="submission" date="2007-06" db="EMBL/GenBank/DDBJ databases">
        <title>Complete sequence of Marinomonas sp. MWYL1.</title>
        <authorList>
            <consortium name="US DOE Joint Genome Institute"/>
            <person name="Copeland A."/>
            <person name="Lucas S."/>
            <person name="Lapidus A."/>
            <person name="Barry K."/>
            <person name="Glavina del Rio T."/>
            <person name="Dalin E."/>
            <person name="Tice H."/>
            <person name="Pitluck S."/>
            <person name="Kiss H."/>
            <person name="Brettin T."/>
            <person name="Bruce D."/>
            <person name="Detter J.C."/>
            <person name="Han C."/>
            <person name="Schmutz J."/>
            <person name="Larimer F."/>
            <person name="Land M."/>
            <person name="Hauser L."/>
            <person name="Kyrpides N."/>
            <person name="Kim E."/>
            <person name="Johnston A.W.B."/>
            <person name="Todd J.D."/>
            <person name="Rogers R."/>
            <person name="Wexler M."/>
            <person name="Bond P.L."/>
            <person name="Li Y."/>
            <person name="Richardson P."/>
        </authorList>
    </citation>
    <scope>NUCLEOTIDE SEQUENCE [LARGE SCALE GENOMIC DNA]</scope>
    <source>
        <strain>MWYL1</strain>
    </source>
</reference>
<proteinExistence type="inferred from homology"/>